<feature type="chain" id="PRO_0000234034" description="2-deoxy-scyllo-inosose synthase">
    <location>
        <begin position="1"/>
        <end position="368"/>
    </location>
</feature>
<feature type="active site" evidence="7">
    <location>
        <position position="141"/>
    </location>
</feature>
<feature type="active site" evidence="7">
    <location>
        <position position="243"/>
    </location>
</feature>
<feature type="binding site" evidence="3">
    <location>
        <position position="42"/>
    </location>
    <ligand>
        <name>NAD(+)</name>
        <dbReference type="ChEBI" id="CHEBI:57540"/>
    </ligand>
</feature>
<feature type="binding site" evidence="3">
    <location>
        <begin position="72"/>
        <end position="75"/>
    </location>
    <ligand>
        <name>NAD(+)</name>
        <dbReference type="ChEBI" id="CHEBI:57540"/>
    </ligand>
</feature>
<feature type="binding site" evidence="3">
    <location>
        <begin position="104"/>
        <end position="108"/>
    </location>
    <ligand>
        <name>NAD(+)</name>
        <dbReference type="ChEBI" id="CHEBI:57540"/>
    </ligand>
</feature>
<feature type="binding site" evidence="3">
    <location>
        <begin position="128"/>
        <end position="129"/>
    </location>
    <ligand>
        <name>NAD(+)</name>
        <dbReference type="ChEBI" id="CHEBI:57540"/>
    </ligand>
</feature>
<feature type="binding site" evidence="3">
    <location>
        <begin position="139"/>
        <end position="141"/>
    </location>
    <ligand>
        <name>NAD(+)</name>
        <dbReference type="ChEBI" id="CHEBI:57540"/>
    </ligand>
</feature>
<feature type="binding site" evidence="3">
    <location>
        <begin position="150"/>
        <end position="151"/>
    </location>
    <ligand>
        <name>NAD(+)</name>
        <dbReference type="ChEBI" id="CHEBI:57540"/>
    </ligand>
</feature>
<feature type="binding site" evidence="3">
    <location>
        <position position="176"/>
    </location>
    <ligand>
        <name>NAD(+)</name>
        <dbReference type="ChEBI" id="CHEBI:57540"/>
    </ligand>
</feature>
<feature type="binding site" evidence="3">
    <location>
        <position position="183"/>
    </location>
    <ligand>
        <name>Co(2+)</name>
        <dbReference type="ChEBI" id="CHEBI:48828"/>
    </ligand>
</feature>
<feature type="binding site" evidence="3">
    <location>
        <position position="246"/>
    </location>
    <ligand>
        <name>Co(2+)</name>
        <dbReference type="ChEBI" id="CHEBI:48828"/>
    </ligand>
</feature>
<feature type="binding site" evidence="3">
    <location>
        <position position="262"/>
    </location>
    <ligand>
        <name>Co(2+)</name>
        <dbReference type="ChEBI" id="CHEBI:48828"/>
    </ligand>
</feature>
<feature type="strand" evidence="10">
    <location>
        <begin position="3"/>
        <end position="8"/>
    </location>
</feature>
<feature type="strand" evidence="10">
    <location>
        <begin position="11"/>
        <end position="18"/>
    </location>
</feature>
<feature type="helix" evidence="10">
    <location>
        <begin position="22"/>
        <end position="27"/>
    </location>
</feature>
<feature type="strand" evidence="10">
    <location>
        <begin position="35"/>
        <end position="42"/>
    </location>
</feature>
<feature type="helix" evidence="10">
    <location>
        <begin position="47"/>
        <end position="57"/>
    </location>
</feature>
<feature type="turn" evidence="10">
    <location>
        <begin position="58"/>
        <end position="60"/>
    </location>
</feature>
<feature type="strand" evidence="10">
    <location>
        <begin position="63"/>
        <end position="68"/>
    </location>
</feature>
<feature type="helix" evidence="10">
    <location>
        <begin position="72"/>
        <end position="74"/>
    </location>
</feature>
<feature type="helix" evidence="10">
    <location>
        <begin position="77"/>
        <end position="89"/>
    </location>
</feature>
<feature type="strand" evidence="10">
    <location>
        <begin position="96"/>
        <end position="103"/>
    </location>
</feature>
<feature type="helix" evidence="10">
    <location>
        <begin position="104"/>
        <end position="116"/>
    </location>
</feature>
<feature type="strand" evidence="10">
    <location>
        <begin position="122"/>
        <end position="127"/>
    </location>
</feature>
<feature type="helix" evidence="10">
    <location>
        <begin position="130"/>
        <end position="134"/>
    </location>
</feature>
<feature type="turn" evidence="10">
    <location>
        <begin position="135"/>
        <end position="137"/>
    </location>
</feature>
<feature type="strand" evidence="10">
    <location>
        <begin position="141"/>
        <end position="146"/>
    </location>
</feature>
<feature type="strand" evidence="10">
    <location>
        <begin position="149"/>
        <end position="156"/>
    </location>
</feature>
<feature type="strand" evidence="10">
    <location>
        <begin position="160"/>
        <end position="165"/>
    </location>
</feature>
<feature type="helix" evidence="10">
    <location>
        <begin position="166"/>
        <end position="170"/>
    </location>
</feature>
<feature type="helix" evidence="10">
    <location>
        <begin position="174"/>
        <end position="190"/>
    </location>
</feature>
<feature type="helix" evidence="10">
    <location>
        <begin position="200"/>
        <end position="202"/>
    </location>
</feature>
<feature type="helix" evidence="10">
    <location>
        <begin position="211"/>
        <end position="229"/>
    </location>
</feature>
<feature type="strand" evidence="10">
    <location>
        <begin position="235"/>
        <end position="237"/>
    </location>
</feature>
<feature type="helix" evidence="10">
    <location>
        <begin position="238"/>
        <end position="243"/>
    </location>
</feature>
<feature type="helix" evidence="10">
    <location>
        <begin position="246"/>
        <end position="255"/>
    </location>
</feature>
<feature type="turn" evidence="10">
    <location>
        <begin position="256"/>
        <end position="258"/>
    </location>
</feature>
<feature type="helix" evidence="10">
    <location>
        <begin position="262"/>
        <end position="279"/>
    </location>
</feature>
<feature type="helix" evidence="10">
    <location>
        <begin position="285"/>
        <end position="297"/>
    </location>
</feature>
<feature type="turn" evidence="10">
    <location>
        <begin position="298"/>
        <end position="302"/>
    </location>
</feature>
<feature type="helix" evidence="10">
    <location>
        <begin position="310"/>
        <end position="318"/>
    </location>
</feature>
<feature type="strand" evidence="10">
    <location>
        <begin position="322"/>
        <end position="327"/>
    </location>
</feature>
<feature type="strand" evidence="10">
    <location>
        <begin position="329"/>
        <end position="335"/>
    </location>
</feature>
<feature type="strand" evidence="10">
    <location>
        <begin position="338"/>
        <end position="340"/>
    </location>
</feature>
<feature type="strand" evidence="10">
    <location>
        <begin position="353"/>
        <end position="356"/>
    </location>
</feature>
<feature type="helix" evidence="10">
    <location>
        <begin position="357"/>
        <end position="366"/>
    </location>
</feature>
<comment type="function">
    <text>Catalyzes the intramolecular carbocycle formation from D-glucose-6-phosphate to 2-deoxy-scyllo-inosose (DOI).</text>
</comment>
<comment type="catalytic activity">
    <reaction evidence="2 4 5">
        <text>D-glucose 6-phosphate = 2-deoxy-L-scyllo-inosose + phosphate</text>
        <dbReference type="Rhea" id="RHEA:33071"/>
        <dbReference type="ChEBI" id="CHEBI:43474"/>
        <dbReference type="ChEBI" id="CHEBI:61548"/>
        <dbReference type="ChEBI" id="CHEBI:64796"/>
        <dbReference type="EC" id="4.2.3.124"/>
    </reaction>
</comment>
<comment type="cofactor">
    <cofactor evidence="3">
        <name>NAD(+)</name>
        <dbReference type="ChEBI" id="CHEBI:57540"/>
    </cofactor>
</comment>
<comment type="cofactor">
    <cofactor evidence="3">
        <name>Co(2+)</name>
        <dbReference type="ChEBI" id="CHEBI:48828"/>
    </cofactor>
    <text evidence="3">Binds 1 Co(2+) ion per subunit.</text>
</comment>
<comment type="activity regulation">
    <text>Strongly inhibited by EDTA, zinc and Cu(2+).</text>
</comment>
<comment type="biophysicochemical properties">
    <kinetics>
        <KM evidence="1">900 uM for glucose-6-phosphate (at pH 7.7 and 46 degrees Celsius)</KM>
        <KM evidence="1">170 uM for NAD(+) (at pH 7.7 and 46 degrees Celsius)</KM>
    </kinetics>
    <phDependence>
        <text evidence="1">Optimum pH is 7.5-8.5.</text>
    </phDependence>
    <temperatureDependence>
        <text evidence="1">Optimum temperature is 46 degrees Celsius.</text>
    </temperatureDependence>
</comment>
<comment type="pathway">
    <text>Metabolic intermediate biosynthesis; 2-deoxystreptamine biosynthesis; 2-deoxystreptamine from D-glucose 6-phosphate: step 1/4.</text>
</comment>
<comment type="pathway">
    <text>Antibiotic biosynthesis; butirosin biosynthesis.</text>
</comment>
<comment type="subunit">
    <text evidence="1 3">Was isolated as a heterodimeric enzyme comprising of BtrC and a smaller polypeptide further identified as PdxT by sequence homology (PubMed:10344560). Homodimer in solution (PubMed:17879343).</text>
</comment>
<comment type="similarity">
    <text evidence="6">Belongs to the sugar phosphate cyclases superfamily. DOI synthase family.</text>
</comment>
<proteinExistence type="evidence at protein level"/>
<reference key="1">
    <citation type="journal article" date="1999" name="J. Antibiot.">
        <title>Molecular cloning of the gene for the key carbocycle-forming enzyme in the biosynthesis of 2-deoxystreptamine-containing aminocyclitol antibiotics and its comparison with dehydroquinate synthase.</title>
        <authorList>
            <person name="Kudo F."/>
            <person name="Tamegai H."/>
            <person name="Fujiwara T."/>
            <person name="Tagami U."/>
            <person name="Hirayama K."/>
            <person name="Kakinuma K."/>
        </authorList>
    </citation>
    <scope>NUCLEOTIDE SEQUENCE [GENOMIC DNA]</scope>
    <scope>PROTEIN SEQUENCE OF 1-22</scope>
    <source>
        <strain>SANK 72073</strain>
    </source>
</reference>
<reference key="2">
    <citation type="submission" date="2004-06" db="EMBL/GenBank/DDBJ databases">
        <title>Analysis and comparison of the biosynthetic gene clusters for the 2-deoxystreptamine-containing aminoglycoside antibiotics ribostamycin, neomycin, lividomycin, paromomycin and butirosin.</title>
        <authorList>
            <person name="Aboshanab K.M.A."/>
            <person name="Schmidt-Beissner H."/>
            <person name="Wehmeier U.F."/>
            <person name="Welzel K."/>
            <person name="Vente A."/>
            <person name="Piepersberg W."/>
        </authorList>
    </citation>
    <scope>NUCLEOTIDE SEQUENCE [GENOMIC DNA]</scope>
    <source>
        <strain>ATCC 21557 / NCIMB 12336 / BU-1709-YQW-B6</strain>
    </source>
</reference>
<reference key="3">
    <citation type="journal article" date="2005" name="J. Antibiot.">
        <title>Extended sequence and functional analysis of the butirosin biosynthetic gene cluster in Bacillus circulans SANK 72073.</title>
        <authorList>
            <person name="Kudo F."/>
            <person name="Numakura M."/>
            <person name="Tamegai H."/>
            <person name="Yamamoto H."/>
            <person name="Eguchi T."/>
            <person name="Kakinuma K."/>
        </authorList>
    </citation>
    <scope>NUCLEOTIDE SEQUENCE [GENOMIC DNA]</scope>
    <source>
        <strain>SANK 72073</strain>
    </source>
</reference>
<reference key="4">
    <citation type="journal article" date="1997" name="J. Antibiot.">
        <title>Kinetic isotope effect and reaction mechanism of 2-deoxy-scyllo-inosose synthase derived from butirosin-producing Bacillus circulans.</title>
        <authorList>
            <person name="Kudo F."/>
            <person name="Yamauchi N."/>
            <person name="Suzuki R."/>
            <person name="Kakinuma K."/>
        </authorList>
    </citation>
    <scope>CATALYTIC ACTIVITY</scope>
    <scope>REACTION MECHANISM</scope>
    <scope>COFACTOR</scope>
    <source>
        <strain>SANK 72073</strain>
    </source>
</reference>
<reference key="5">
    <citation type="journal article" date="1998" name="Biosci. Biotechnol. Biochem.">
        <title>Substrate specificity of 2-deoxy-scyllo-inosose synthase, the starter enzyme for 2-deoxystreptamine biosynthesis, toward deoxyglucose-6-phosphates and proposed mechanism.</title>
        <authorList>
            <person name="Iwase N."/>
            <person name="Kudo F."/>
            <person name="Yamauchi N."/>
            <person name="Kakinuma K."/>
        </authorList>
    </citation>
    <scope>CATALYTIC ACTIVITY</scope>
    <scope>REACTION MECHANISM</scope>
    <source>
        <strain>SANK 72073</strain>
    </source>
</reference>
<reference key="6">
    <citation type="journal article" date="1999" name="J. Antibiot.">
        <title>Purification and characterization of 2-deoxy-scyllo-inosose synthase derived from Bacillus circulans. A crucial carbocyclization enzyme in the biosynthesis of 2-deoxystreptamine-containing aminoglycoside antibiotics.</title>
        <authorList>
            <person name="Kudo F."/>
            <person name="Hosomi Y."/>
            <person name="Tamegai H."/>
            <person name="Kakinuma K."/>
        </authorList>
    </citation>
    <scope>CHARACTERIZATION</scope>
    <scope>COFACTOR</scope>
    <scope>SUBUNIT</scope>
    <scope>BIOPHYSICOCHEMICAL PROPERTIES</scope>
    <source>
        <strain>SANK 72073</strain>
    </source>
</reference>
<reference key="7">
    <citation type="journal article" date="2004" name="J. Org. Chem.">
        <title>Active site mapping of 2-deoxy-scyllo-inosose synthase, the key starter enzyme for the biosynthesis of 2-deoxystreptamine. Mechanism-based inhibition and identification of Lysine-141 as the entrapped nucleophile.</title>
        <authorList>
            <person name="Nango E."/>
            <person name="Eguchi T."/>
            <person name="Kakinuma K."/>
        </authorList>
    </citation>
    <scope>INVOLVEMENT OF LYS-141 IN REACTION CATALYSIS</scope>
    <source>
        <strain>SANK 72073</strain>
    </source>
</reference>
<reference key="8">
    <citation type="journal article" date="2005" name="Acta Crystallogr. F">
        <title>Crystallization and X-ray analysis of 2-deoxy-scyllo-inosose synthase, the key enzyme in the biosynthesis of 2-deoxystreptamine-containing aminoglycoside antibiotics.</title>
        <authorList>
            <person name="Nango E."/>
            <person name="Kumasaka T."/>
            <person name="Sato T."/>
            <person name="Tanaka N."/>
            <person name="Kakinuma K."/>
            <person name="Eguchi T."/>
        </authorList>
    </citation>
    <scope>CRYSTALLIZATION</scope>
    <source>
        <strain>SANK 72073</strain>
    </source>
</reference>
<reference key="9">
    <citation type="journal article" date="2005" name="Bioorg. Chem.">
        <title>Stereospecificity of hydride transfer in NAD+-catalyzed 2-deoxy-scyllo-inosose synthase, the key enzyme in the biosynthesis of 2-deoxystreptamine-containing aminocyclitol antibiotics.</title>
        <authorList>
            <person name="Huang Z."/>
            <person name="Kakinuma K."/>
            <person name="Eguchi T."/>
        </authorList>
    </citation>
    <scope>CATALYTIC ACTIVITY</scope>
    <scope>REACTION STEREOCHEMISTRY</scope>
    <source>
        <strain>SANK 72073</strain>
    </source>
</reference>
<reference evidence="8 9" key="10">
    <citation type="journal article" date="2008" name="Proteins">
        <title>Structure of 2-deoxy-scyllo-inosose synthase, a key enzyme in the biosynthesis of 2-deoxystreptamine-containing aminoglycoside antibiotics, in complex with a mechanism-based inhibitor and NAD+.</title>
        <authorList>
            <person name="Nango E."/>
            <person name="Kumasaka T."/>
            <person name="Hirayama T."/>
            <person name="Tanaka N."/>
            <person name="Eguchi T."/>
        </authorList>
    </citation>
    <scope>X-RAY CRYSTALLOGRAPHY (2.15 ANGSTROMS) IN COMPLEX WITH NAD; COBALT AND INHIBITOR</scope>
    <scope>COFACTOR</scope>
    <scope>SUBUNIT</scope>
    <scope>ACTIVE SITE</scope>
</reference>
<name>DOIS_NIACI</name>
<gene>
    <name type="primary">btrC</name>
</gene>
<protein>
    <recommendedName>
        <fullName>2-deoxy-scyllo-inosose synthase</fullName>
        <shortName>DOI synthase</shortName>
        <shortName>DOIS</shortName>
        <ecNumber>4.2.3.124</ecNumber>
    </recommendedName>
</protein>
<evidence type="ECO:0000269" key="1">
    <source>
    </source>
</evidence>
<evidence type="ECO:0000269" key="2">
    <source>
    </source>
</evidence>
<evidence type="ECO:0000269" key="3">
    <source>
    </source>
</evidence>
<evidence type="ECO:0000269" key="4">
    <source>
    </source>
</evidence>
<evidence type="ECO:0000269" key="5">
    <source>
    </source>
</evidence>
<evidence type="ECO:0000305" key="6"/>
<evidence type="ECO:0000305" key="7">
    <source>
    </source>
</evidence>
<evidence type="ECO:0007744" key="8">
    <source>
        <dbReference type="PDB" id="2D2X"/>
    </source>
</evidence>
<evidence type="ECO:0007744" key="9">
    <source>
        <dbReference type="PDB" id="2GRU"/>
    </source>
</evidence>
<evidence type="ECO:0007829" key="10">
    <source>
        <dbReference type="PDB" id="2GRU"/>
    </source>
</evidence>
<organism>
    <name type="scientific">Niallia circulans</name>
    <name type="common">Bacillus circulans</name>
    <dbReference type="NCBI Taxonomy" id="1397"/>
    <lineage>
        <taxon>Bacteria</taxon>
        <taxon>Bacillati</taxon>
        <taxon>Bacillota</taxon>
        <taxon>Bacilli</taxon>
        <taxon>Bacillales</taxon>
        <taxon>Bacillaceae</taxon>
        <taxon>Niallia</taxon>
    </lineage>
</organism>
<accession>Q9S5E2</accession>
<sequence>MTTKQICFADRCFNFAFGEHVLESVESYIPRDEFDQYIMISDSGVPDSIVHYAAEYFGKLAPVHILRFQGGEEYKTLSTVTNLQERAIALGANRRTAIVAVGGGLTGNVAGVAAGMMFRGIALIHVPTTFLAASDSVLSIKQAVNLTSGKNLVGFYYPPRFVFADTRILSESPPRQVKAGMCELVKNMLILENDNKEFTEDDLNSANVYSPKQLETFINFCISAKMSVLSEDIYEKKKGLIFEYGHTIGHAIELAEQGGITHGEAIAVGMIYAAKIANRMNLMPEHDVSAHYWLLNKIGALQDIPLKSDPDSIFHYLIHDNKRGYIKLDEDNLGMILLSGVGKPAMYNQTLLTPVRKTLIKEVIREGL</sequence>
<dbReference type="EC" id="4.2.3.124"/>
<dbReference type="EMBL" id="AB019237">
    <property type="protein sequence ID" value="BAA83344.1"/>
    <property type="molecule type" value="Genomic_DNA"/>
</dbReference>
<dbReference type="EMBL" id="AJ781030">
    <property type="protein sequence ID" value="CAG77421.1"/>
    <property type="molecule type" value="Genomic_DNA"/>
</dbReference>
<dbReference type="EMBL" id="AB097196">
    <property type="protein sequence ID" value="BAE07067.1"/>
    <property type="molecule type" value="Genomic_DNA"/>
</dbReference>
<dbReference type="PDB" id="2D2X">
    <property type="method" value="X-ray"/>
    <property type="resolution" value="2.30 A"/>
    <property type="chains" value="A/B=1-368"/>
</dbReference>
<dbReference type="PDB" id="2GRU">
    <property type="method" value="X-ray"/>
    <property type="resolution" value="2.15 A"/>
    <property type="chains" value="A/B=1-368"/>
</dbReference>
<dbReference type="PDBsum" id="2D2X"/>
<dbReference type="PDBsum" id="2GRU"/>
<dbReference type="SMR" id="Q9S5E2"/>
<dbReference type="KEGG" id="ag:BAE07067"/>
<dbReference type="KEGG" id="ag:BAE07068"/>
<dbReference type="BioCyc" id="MetaCyc:MONOMER-17225"/>
<dbReference type="BRENDA" id="4.2.3.124">
    <property type="organism ID" value="649"/>
</dbReference>
<dbReference type="SABIO-RK" id="Q9S5E2"/>
<dbReference type="UniPathway" id="UPA00907">
    <property type="reaction ID" value="UER00921"/>
</dbReference>
<dbReference type="UniPathway" id="UPA00964"/>
<dbReference type="EvolutionaryTrace" id="Q9S5E2"/>
<dbReference type="GO" id="GO:0003856">
    <property type="term" value="F:3-dehydroquinate synthase activity"/>
    <property type="evidence" value="ECO:0007669"/>
    <property type="project" value="TreeGrafter"/>
</dbReference>
<dbReference type="GO" id="GO:0046872">
    <property type="term" value="F:metal ion binding"/>
    <property type="evidence" value="ECO:0007669"/>
    <property type="project" value="UniProtKB-KW"/>
</dbReference>
<dbReference type="GO" id="GO:0017000">
    <property type="term" value="P:antibiotic biosynthetic process"/>
    <property type="evidence" value="ECO:0007669"/>
    <property type="project" value="UniProtKB-KW"/>
</dbReference>
<dbReference type="GO" id="GO:0009073">
    <property type="term" value="P:aromatic amino acid family biosynthetic process"/>
    <property type="evidence" value="ECO:0007669"/>
    <property type="project" value="InterPro"/>
</dbReference>
<dbReference type="CDD" id="cd08197">
    <property type="entry name" value="DOIS"/>
    <property type="match status" value="1"/>
</dbReference>
<dbReference type="Gene3D" id="3.40.50.1970">
    <property type="match status" value="1"/>
</dbReference>
<dbReference type="Gene3D" id="1.20.1090.10">
    <property type="entry name" value="Dehydroquinate synthase-like - alpha domain"/>
    <property type="match status" value="1"/>
</dbReference>
<dbReference type="InterPro" id="IPR050071">
    <property type="entry name" value="Dehydroquinate_synthase"/>
</dbReference>
<dbReference type="InterPro" id="IPR030963">
    <property type="entry name" value="DHQ_synth_fam"/>
</dbReference>
<dbReference type="InterPro" id="IPR030960">
    <property type="entry name" value="DHQS/DOIS_N"/>
</dbReference>
<dbReference type="InterPro" id="IPR056179">
    <property type="entry name" value="DHQS_C"/>
</dbReference>
<dbReference type="PANTHER" id="PTHR43622">
    <property type="entry name" value="3-DEHYDROQUINATE SYNTHASE"/>
    <property type="match status" value="1"/>
</dbReference>
<dbReference type="PANTHER" id="PTHR43622:SF1">
    <property type="entry name" value="3-DEHYDROQUINATE SYNTHASE"/>
    <property type="match status" value="1"/>
</dbReference>
<dbReference type="Pfam" id="PF01761">
    <property type="entry name" value="DHQ_synthase"/>
    <property type="match status" value="1"/>
</dbReference>
<dbReference type="Pfam" id="PF24621">
    <property type="entry name" value="DHQS_C"/>
    <property type="match status" value="1"/>
</dbReference>
<dbReference type="PIRSF" id="PIRSF001455">
    <property type="entry name" value="DHQ_synth"/>
    <property type="match status" value="1"/>
</dbReference>
<dbReference type="SUPFAM" id="SSF56796">
    <property type="entry name" value="Dehydroquinate synthase-like"/>
    <property type="match status" value="1"/>
</dbReference>
<keyword id="KW-0002">3D-structure</keyword>
<keyword id="KW-0045">Antibiotic biosynthesis</keyword>
<keyword id="KW-0170">Cobalt</keyword>
<keyword id="KW-0903">Direct protein sequencing</keyword>
<keyword id="KW-0456">Lyase</keyword>
<keyword id="KW-0479">Metal-binding</keyword>
<keyword id="KW-0520">NAD</keyword>